<feature type="chain" id="PRO_1000198969" description="Aspartate--tRNA(Asp/Asn) ligase">
    <location>
        <begin position="1"/>
        <end position="588"/>
    </location>
</feature>
<feature type="region of interest" description="Aspartate" evidence="1">
    <location>
        <begin position="198"/>
        <end position="201"/>
    </location>
</feature>
<feature type="binding site" evidence="1">
    <location>
        <position position="174"/>
    </location>
    <ligand>
        <name>L-aspartate</name>
        <dbReference type="ChEBI" id="CHEBI:29991"/>
    </ligand>
</feature>
<feature type="binding site" evidence="1">
    <location>
        <begin position="220"/>
        <end position="222"/>
    </location>
    <ligand>
        <name>ATP</name>
        <dbReference type="ChEBI" id="CHEBI:30616"/>
    </ligand>
</feature>
<feature type="binding site" evidence="1">
    <location>
        <position position="220"/>
    </location>
    <ligand>
        <name>L-aspartate</name>
        <dbReference type="ChEBI" id="CHEBI:29991"/>
    </ligand>
</feature>
<feature type="binding site" evidence="1">
    <location>
        <position position="229"/>
    </location>
    <ligand>
        <name>ATP</name>
        <dbReference type="ChEBI" id="CHEBI:30616"/>
    </ligand>
</feature>
<feature type="binding site" evidence="1">
    <location>
        <position position="450"/>
    </location>
    <ligand>
        <name>L-aspartate</name>
        <dbReference type="ChEBI" id="CHEBI:29991"/>
    </ligand>
</feature>
<feature type="binding site" evidence="1">
    <location>
        <position position="484"/>
    </location>
    <ligand>
        <name>ATP</name>
        <dbReference type="ChEBI" id="CHEBI:30616"/>
    </ligand>
</feature>
<feature type="binding site" evidence="1">
    <location>
        <position position="491"/>
    </location>
    <ligand>
        <name>L-aspartate</name>
        <dbReference type="ChEBI" id="CHEBI:29991"/>
    </ligand>
</feature>
<feature type="binding site" evidence="1">
    <location>
        <begin position="536"/>
        <end position="539"/>
    </location>
    <ligand>
        <name>ATP</name>
        <dbReference type="ChEBI" id="CHEBI:30616"/>
    </ligand>
</feature>
<feature type="site" description="Important for tRNA non-discrimination" evidence="1">
    <location>
        <position position="31"/>
    </location>
</feature>
<proteinExistence type="inferred from homology"/>
<comment type="function">
    <text evidence="1">Aspartyl-tRNA synthetase with relaxed tRNA specificity since it is able to aspartylate not only its cognate tRNA(Asp) but also tRNA(Asn). Reaction proceeds in two steps: L-aspartate is first activated by ATP to form Asp-AMP and then transferred to the acceptor end of tRNA(Asp/Asn).</text>
</comment>
<comment type="catalytic activity">
    <reaction evidence="1">
        <text>tRNA(Asx) + L-aspartate + ATP = L-aspartyl-tRNA(Asx) + AMP + diphosphate</text>
        <dbReference type="Rhea" id="RHEA:18349"/>
        <dbReference type="Rhea" id="RHEA-COMP:9710"/>
        <dbReference type="Rhea" id="RHEA-COMP:9711"/>
        <dbReference type="ChEBI" id="CHEBI:29991"/>
        <dbReference type="ChEBI" id="CHEBI:30616"/>
        <dbReference type="ChEBI" id="CHEBI:33019"/>
        <dbReference type="ChEBI" id="CHEBI:78442"/>
        <dbReference type="ChEBI" id="CHEBI:78516"/>
        <dbReference type="ChEBI" id="CHEBI:456215"/>
        <dbReference type="EC" id="6.1.1.23"/>
    </reaction>
</comment>
<comment type="subunit">
    <text evidence="1">Homodimer.</text>
</comment>
<comment type="subcellular location">
    <subcellularLocation>
        <location evidence="1">Cytoplasm</location>
    </subcellularLocation>
</comment>
<comment type="similarity">
    <text evidence="1">Belongs to the class-II aminoacyl-tRNA synthetase family. Type 1 subfamily.</text>
</comment>
<name>SYDND_CHLAD</name>
<accession>B8G6W9</accession>
<protein>
    <recommendedName>
        <fullName evidence="1">Aspartate--tRNA(Asp/Asn) ligase</fullName>
        <ecNumber evidence="1">6.1.1.23</ecNumber>
    </recommendedName>
    <alternativeName>
        <fullName evidence="1">Aspartyl-tRNA synthetase</fullName>
        <shortName evidence="1">AspRS</shortName>
    </alternativeName>
    <alternativeName>
        <fullName evidence="1">Non-discriminating aspartyl-tRNA synthetase</fullName>
        <shortName evidence="1">ND-AspRS</shortName>
    </alternativeName>
</protein>
<evidence type="ECO:0000255" key="1">
    <source>
        <dbReference type="HAMAP-Rule" id="MF_00044"/>
    </source>
</evidence>
<gene>
    <name evidence="1" type="primary">aspS</name>
    <name type="ordered locus">Cagg_3070</name>
</gene>
<dbReference type="EC" id="6.1.1.23" evidence="1"/>
<dbReference type="EMBL" id="CP001337">
    <property type="protein sequence ID" value="ACL25928.1"/>
    <property type="molecule type" value="Genomic_DNA"/>
</dbReference>
<dbReference type="RefSeq" id="WP_015941780.1">
    <property type="nucleotide sequence ID" value="NC_011831.1"/>
</dbReference>
<dbReference type="SMR" id="B8G6W9"/>
<dbReference type="STRING" id="326427.Cagg_3070"/>
<dbReference type="KEGG" id="cag:Cagg_3070"/>
<dbReference type="eggNOG" id="COG0173">
    <property type="taxonomic scope" value="Bacteria"/>
</dbReference>
<dbReference type="HOGENOM" id="CLU_014330_3_2_0"/>
<dbReference type="OrthoDB" id="9802326at2"/>
<dbReference type="Proteomes" id="UP000002508">
    <property type="component" value="Chromosome"/>
</dbReference>
<dbReference type="GO" id="GO:0005737">
    <property type="term" value="C:cytoplasm"/>
    <property type="evidence" value="ECO:0007669"/>
    <property type="project" value="UniProtKB-SubCell"/>
</dbReference>
<dbReference type="GO" id="GO:0004815">
    <property type="term" value="F:aspartate-tRNA ligase activity"/>
    <property type="evidence" value="ECO:0007669"/>
    <property type="project" value="UniProtKB-UniRule"/>
</dbReference>
<dbReference type="GO" id="GO:0050560">
    <property type="term" value="F:aspartate-tRNA(Asn) ligase activity"/>
    <property type="evidence" value="ECO:0007669"/>
    <property type="project" value="UniProtKB-EC"/>
</dbReference>
<dbReference type="GO" id="GO:0005524">
    <property type="term" value="F:ATP binding"/>
    <property type="evidence" value="ECO:0007669"/>
    <property type="project" value="UniProtKB-UniRule"/>
</dbReference>
<dbReference type="GO" id="GO:0003676">
    <property type="term" value="F:nucleic acid binding"/>
    <property type="evidence" value="ECO:0007669"/>
    <property type="project" value="InterPro"/>
</dbReference>
<dbReference type="GO" id="GO:0006422">
    <property type="term" value="P:aspartyl-tRNA aminoacylation"/>
    <property type="evidence" value="ECO:0007669"/>
    <property type="project" value="UniProtKB-UniRule"/>
</dbReference>
<dbReference type="CDD" id="cd00777">
    <property type="entry name" value="AspRS_core"/>
    <property type="match status" value="1"/>
</dbReference>
<dbReference type="CDD" id="cd04317">
    <property type="entry name" value="EcAspRS_like_N"/>
    <property type="match status" value="1"/>
</dbReference>
<dbReference type="Gene3D" id="3.30.930.10">
    <property type="entry name" value="Bira Bifunctional Protein, Domain 2"/>
    <property type="match status" value="1"/>
</dbReference>
<dbReference type="Gene3D" id="3.30.1360.30">
    <property type="entry name" value="GAD-like domain"/>
    <property type="match status" value="1"/>
</dbReference>
<dbReference type="Gene3D" id="2.40.50.140">
    <property type="entry name" value="Nucleic acid-binding proteins"/>
    <property type="match status" value="1"/>
</dbReference>
<dbReference type="HAMAP" id="MF_00044">
    <property type="entry name" value="Asp_tRNA_synth_type1"/>
    <property type="match status" value="1"/>
</dbReference>
<dbReference type="InterPro" id="IPR004364">
    <property type="entry name" value="Aa-tRNA-synt_II"/>
</dbReference>
<dbReference type="InterPro" id="IPR006195">
    <property type="entry name" value="aa-tRNA-synth_II"/>
</dbReference>
<dbReference type="InterPro" id="IPR045864">
    <property type="entry name" value="aa-tRNA-synth_II/BPL/LPL"/>
</dbReference>
<dbReference type="InterPro" id="IPR004524">
    <property type="entry name" value="Asp-tRNA-ligase_1"/>
</dbReference>
<dbReference type="InterPro" id="IPR047089">
    <property type="entry name" value="Asp-tRNA-ligase_1_N"/>
</dbReference>
<dbReference type="InterPro" id="IPR002312">
    <property type="entry name" value="Asp/Asn-tRNA-synth_IIb"/>
</dbReference>
<dbReference type="InterPro" id="IPR047090">
    <property type="entry name" value="AspRS_core"/>
</dbReference>
<dbReference type="InterPro" id="IPR004115">
    <property type="entry name" value="GAD-like_sf"/>
</dbReference>
<dbReference type="InterPro" id="IPR029351">
    <property type="entry name" value="GAD_dom"/>
</dbReference>
<dbReference type="InterPro" id="IPR012340">
    <property type="entry name" value="NA-bd_OB-fold"/>
</dbReference>
<dbReference type="InterPro" id="IPR004365">
    <property type="entry name" value="NA-bd_OB_tRNA"/>
</dbReference>
<dbReference type="NCBIfam" id="TIGR00459">
    <property type="entry name" value="aspS_bact"/>
    <property type="match status" value="1"/>
</dbReference>
<dbReference type="NCBIfam" id="NF001750">
    <property type="entry name" value="PRK00476.1"/>
    <property type="match status" value="1"/>
</dbReference>
<dbReference type="PANTHER" id="PTHR22594:SF5">
    <property type="entry name" value="ASPARTATE--TRNA LIGASE, MITOCHONDRIAL"/>
    <property type="match status" value="1"/>
</dbReference>
<dbReference type="PANTHER" id="PTHR22594">
    <property type="entry name" value="ASPARTYL/LYSYL-TRNA SYNTHETASE"/>
    <property type="match status" value="1"/>
</dbReference>
<dbReference type="Pfam" id="PF02938">
    <property type="entry name" value="GAD"/>
    <property type="match status" value="1"/>
</dbReference>
<dbReference type="Pfam" id="PF00152">
    <property type="entry name" value="tRNA-synt_2"/>
    <property type="match status" value="1"/>
</dbReference>
<dbReference type="Pfam" id="PF01336">
    <property type="entry name" value="tRNA_anti-codon"/>
    <property type="match status" value="1"/>
</dbReference>
<dbReference type="PRINTS" id="PR01042">
    <property type="entry name" value="TRNASYNTHASP"/>
</dbReference>
<dbReference type="SUPFAM" id="SSF55681">
    <property type="entry name" value="Class II aaRS and biotin synthetases"/>
    <property type="match status" value="1"/>
</dbReference>
<dbReference type="SUPFAM" id="SSF55261">
    <property type="entry name" value="GAD domain-like"/>
    <property type="match status" value="1"/>
</dbReference>
<dbReference type="SUPFAM" id="SSF50249">
    <property type="entry name" value="Nucleic acid-binding proteins"/>
    <property type="match status" value="1"/>
</dbReference>
<dbReference type="PROSITE" id="PS50862">
    <property type="entry name" value="AA_TRNA_LIGASE_II"/>
    <property type="match status" value="1"/>
</dbReference>
<keyword id="KW-0030">Aminoacyl-tRNA synthetase</keyword>
<keyword id="KW-0067">ATP-binding</keyword>
<keyword id="KW-0963">Cytoplasm</keyword>
<keyword id="KW-0436">Ligase</keyword>
<keyword id="KW-0547">Nucleotide-binding</keyword>
<keyword id="KW-0648">Protein biosynthesis</keyword>
<reference key="1">
    <citation type="submission" date="2008-12" db="EMBL/GenBank/DDBJ databases">
        <title>Complete sequence of Chloroflexus aggregans DSM 9485.</title>
        <authorList>
            <consortium name="US DOE Joint Genome Institute"/>
            <person name="Lucas S."/>
            <person name="Copeland A."/>
            <person name="Lapidus A."/>
            <person name="Glavina del Rio T."/>
            <person name="Dalin E."/>
            <person name="Tice H."/>
            <person name="Pitluck S."/>
            <person name="Foster B."/>
            <person name="Larimer F."/>
            <person name="Land M."/>
            <person name="Hauser L."/>
            <person name="Kyrpides N."/>
            <person name="Mikhailova N."/>
            <person name="Bryant D.A."/>
            <person name="Richardson P."/>
        </authorList>
    </citation>
    <scope>NUCLEOTIDE SEQUENCE [LARGE SCALE GENOMIC DNA]</scope>
    <source>
        <strain>MD-66 / DSM 9485</strain>
    </source>
</reference>
<sequence>MYRSHTCGELRPAHAGQEVTLAGWVHRRRDHGDLIFIDLRDRYGITQVVFNSANAAAHAVAETVRSEYVLQVRGKVRIRPAEAVNPDIATGEIEVDAFEAQVLNPARTPPIYIAKEAGEDESVRLKYRYLDLRRERMQRNLILRHRVVKFIRDFLDAEGFIEIETPILIKSTPEGARDYLVPSRLHPGKFYALPQSPQQLKQLLMVAGYDKYFQIARCFRDEDQRADRQPEFTQLDMEMSFVDQEDVINLIERLFTELCRTVTPHKRLLTPFRRLTYAEAMERYGSDKPDLRYDLELVNLSDVLAETPFQVFRSVLAVGGQVKGIRVPGCGHFSRKQIDELTEVARSGGAKGLAWAVVPTDGGDVRSSFAKNLAPGEFDALAQRMGAQPGDLLLIVADRPVVVAASLDKLRRKLADLLQLADPDTLCFAWVVDFPLVEWNEEEQRWDAVHHPFTSPKDEDLHLLATDPGKVRAKAYDLILNGYEAGGGSIRIHRRDVQQQVFSLLGIGEEKAQAQFGHMLEAFEYGAPPHGGIAPGIDRLVMILADEPTIREVMAFPKTQQAVDLMTNAPSPVDERQLKELHIRIVED</sequence>
<organism>
    <name type="scientific">Chloroflexus aggregans (strain MD-66 / DSM 9485)</name>
    <dbReference type="NCBI Taxonomy" id="326427"/>
    <lineage>
        <taxon>Bacteria</taxon>
        <taxon>Bacillati</taxon>
        <taxon>Chloroflexota</taxon>
        <taxon>Chloroflexia</taxon>
        <taxon>Chloroflexales</taxon>
        <taxon>Chloroflexineae</taxon>
        <taxon>Chloroflexaceae</taxon>
        <taxon>Chloroflexus</taxon>
    </lineage>
</organism>